<accession>Q2QQ96</accession>
<accession>A0A0P0YAB1</accession>
<gene>
    <name type="primary">CYCA2-1</name>
    <name type="ordered locus">Os12g0502300</name>
    <name type="ordered locus">LOC_Os12g31810</name>
</gene>
<keyword id="KW-0131">Cell cycle</keyword>
<keyword id="KW-0132">Cell division</keyword>
<keyword id="KW-0195">Cyclin</keyword>
<keyword id="KW-1185">Reference proteome</keyword>
<sequence>MAGRKENPVLTACQAPSGRITRAQAAANRGRFGFAPSVSLPARTERKQTAKGKTKRGALDEITSASTATSAPQPKRRTVLKDVTNIGCANSSKNCTTTSKLQQKSKPTQRVKQIPSKKQCAKKVPKLPPPAVAGTSFVIDSKSSEETQKVELLAKAEEPTNLFENEGLLSLQNIERNRDSNCHEAFFEARNAMDKHELADSKPGDSSGLGFIDIDNDNGNPQMCASYASEIYTNLMASELIRRPRSNYMEALQRDITKGMRGILIDWLVEVSEEYKLVPDTLYLTINLIDRFLSQHYIERQKLQLLGITSMLIASKYEEICAPRVEEFCFITDNTYTKAEVLKMEGLVLNDMGFHLSVPTTKTFLRRFLRAAQASRNVPSITLGYLANYLAELTLIDYSFLKFLPSVVAASAVFLARWTLDQSDIPWNHTLEHYTSYKSSDIQICVCALRELQHNTSNCPLNAIREKYRQQKFECVANLTSPELGQSLFS</sequence>
<name>CCA21_ORYSJ</name>
<evidence type="ECO:0000256" key="1">
    <source>
        <dbReference type="SAM" id="MobiDB-lite"/>
    </source>
</evidence>
<evidence type="ECO:0000305" key="2"/>
<organism>
    <name type="scientific">Oryza sativa subsp. japonica</name>
    <name type="common">Rice</name>
    <dbReference type="NCBI Taxonomy" id="39947"/>
    <lineage>
        <taxon>Eukaryota</taxon>
        <taxon>Viridiplantae</taxon>
        <taxon>Streptophyta</taxon>
        <taxon>Embryophyta</taxon>
        <taxon>Tracheophyta</taxon>
        <taxon>Spermatophyta</taxon>
        <taxon>Magnoliopsida</taxon>
        <taxon>Liliopsida</taxon>
        <taxon>Poales</taxon>
        <taxon>Poaceae</taxon>
        <taxon>BOP clade</taxon>
        <taxon>Oryzoideae</taxon>
        <taxon>Oryzeae</taxon>
        <taxon>Oryzinae</taxon>
        <taxon>Oryza</taxon>
        <taxon>Oryza sativa</taxon>
    </lineage>
</organism>
<proteinExistence type="evidence at transcript level"/>
<feature type="chain" id="PRO_0000286997" description="Cyclin-A2-1">
    <location>
        <begin position="1"/>
        <end position="490"/>
    </location>
</feature>
<feature type="region of interest" description="Disordered" evidence="1">
    <location>
        <begin position="34"/>
        <end position="76"/>
    </location>
</feature>
<feature type="compositionally biased region" description="Polar residues" evidence="1">
    <location>
        <begin position="63"/>
        <end position="72"/>
    </location>
</feature>
<feature type="sequence conflict" description="In Ref. 5; AK106653." evidence="2" ref="5">
    <original>K</original>
    <variation>M</variation>
    <location>
        <position position="122"/>
    </location>
</feature>
<feature type="sequence conflict" description="In Ref. 5; AK106653." evidence="2" ref="5">
    <original>N</original>
    <variation>D</variation>
    <location>
        <position position="177"/>
    </location>
</feature>
<feature type="sequence conflict" description="In Ref. 5; AK106653." evidence="2" ref="5">
    <original>A</original>
    <variation>V</variation>
    <location>
        <position position="251"/>
    </location>
</feature>
<reference key="1">
    <citation type="journal article" date="2005" name="BMC Biol.">
        <title>The sequence of rice chromosomes 11 and 12, rich in disease resistance genes and recent gene duplications.</title>
        <authorList>
            <consortium name="The rice chromosomes 11 and 12 sequencing consortia"/>
        </authorList>
    </citation>
    <scope>NUCLEOTIDE SEQUENCE [LARGE SCALE GENOMIC DNA]</scope>
    <source>
        <strain>cv. Nipponbare</strain>
    </source>
</reference>
<reference key="2">
    <citation type="journal article" date="2005" name="Nature">
        <title>The map-based sequence of the rice genome.</title>
        <authorList>
            <consortium name="International rice genome sequencing project (IRGSP)"/>
        </authorList>
    </citation>
    <scope>NUCLEOTIDE SEQUENCE [LARGE SCALE GENOMIC DNA]</scope>
    <source>
        <strain>cv. Nipponbare</strain>
    </source>
</reference>
<reference key="3">
    <citation type="journal article" date="2008" name="Nucleic Acids Res.">
        <title>The rice annotation project database (RAP-DB): 2008 update.</title>
        <authorList>
            <consortium name="The rice annotation project (RAP)"/>
        </authorList>
    </citation>
    <scope>GENOME REANNOTATION</scope>
    <source>
        <strain>cv. Nipponbare</strain>
    </source>
</reference>
<reference key="4">
    <citation type="journal article" date="2013" name="Rice">
        <title>Improvement of the Oryza sativa Nipponbare reference genome using next generation sequence and optical map data.</title>
        <authorList>
            <person name="Kawahara Y."/>
            <person name="de la Bastide M."/>
            <person name="Hamilton J.P."/>
            <person name="Kanamori H."/>
            <person name="McCombie W.R."/>
            <person name="Ouyang S."/>
            <person name="Schwartz D.C."/>
            <person name="Tanaka T."/>
            <person name="Wu J."/>
            <person name="Zhou S."/>
            <person name="Childs K.L."/>
            <person name="Davidson R.M."/>
            <person name="Lin H."/>
            <person name="Quesada-Ocampo L."/>
            <person name="Vaillancourt B."/>
            <person name="Sakai H."/>
            <person name="Lee S.S."/>
            <person name="Kim J."/>
            <person name="Numa H."/>
            <person name="Itoh T."/>
            <person name="Buell C.R."/>
            <person name="Matsumoto T."/>
        </authorList>
    </citation>
    <scope>GENOME REANNOTATION</scope>
    <source>
        <strain>cv. Nipponbare</strain>
    </source>
</reference>
<reference key="5">
    <citation type="journal article" date="2003" name="Science">
        <title>Collection, mapping, and annotation of over 28,000 cDNA clones from japonica rice.</title>
        <authorList>
            <consortium name="The rice full-length cDNA consortium"/>
        </authorList>
    </citation>
    <scope>NUCLEOTIDE SEQUENCE [LARGE SCALE MRNA]</scope>
    <source>
        <strain>cv. Nipponbare</strain>
    </source>
</reference>
<reference key="6">
    <citation type="journal article" date="2006" name="Mol. Genet. Genomics">
        <title>Genome-wide analysis of cyclin family in rice (Oryza sativa L.).</title>
        <authorList>
            <person name="La H."/>
            <person name="Li J."/>
            <person name="Ji Z."/>
            <person name="Cheng Y."/>
            <person name="Li X."/>
            <person name="Jiang S."/>
            <person name="Venkatesh P.N."/>
            <person name="Ramachandran S."/>
        </authorList>
    </citation>
    <scope>GENE FAMILY</scope>
    <scope>NOMENCLATURE</scope>
</reference>
<comment type="similarity">
    <text evidence="2">Belongs to the cyclin family. Cyclin AB subfamily.</text>
</comment>
<dbReference type="EMBL" id="DP000011">
    <property type="protein sequence ID" value="ABA98639.1"/>
    <property type="molecule type" value="Genomic_DNA"/>
</dbReference>
<dbReference type="EMBL" id="AP008218">
    <property type="protein sequence ID" value="BAF29847.1"/>
    <property type="molecule type" value="Genomic_DNA"/>
</dbReference>
<dbReference type="EMBL" id="AP014968">
    <property type="protein sequence ID" value="BAT17261.1"/>
    <property type="molecule type" value="Genomic_DNA"/>
</dbReference>
<dbReference type="EMBL" id="AK106653">
    <property type="status" value="NOT_ANNOTATED_CDS"/>
    <property type="molecule type" value="mRNA"/>
</dbReference>
<dbReference type="RefSeq" id="XP_015618892.1">
    <property type="nucleotide sequence ID" value="XM_015763406.1"/>
</dbReference>
<dbReference type="RefSeq" id="XP_015618893.1">
    <property type="nucleotide sequence ID" value="XM_015763407.1"/>
</dbReference>
<dbReference type="RefSeq" id="XP_015618894.1">
    <property type="nucleotide sequence ID" value="XM_015763408.1"/>
</dbReference>
<dbReference type="SMR" id="Q2QQ96"/>
<dbReference type="FunCoup" id="Q2QQ96">
    <property type="interactions" value="929"/>
</dbReference>
<dbReference type="STRING" id="39947.Q2QQ96"/>
<dbReference type="PaxDb" id="39947-Q2QQ96"/>
<dbReference type="EnsemblPlants" id="Os12t0502300-01">
    <property type="protein sequence ID" value="Os12t0502300-01"/>
    <property type="gene ID" value="Os12g0502300"/>
</dbReference>
<dbReference type="Gramene" id="Os12t0502300-01">
    <property type="protein sequence ID" value="Os12t0502300-01"/>
    <property type="gene ID" value="Os12g0502300"/>
</dbReference>
<dbReference type="KEGG" id="dosa:Os12g0502300"/>
<dbReference type="eggNOG" id="KOG0654">
    <property type="taxonomic scope" value="Eukaryota"/>
</dbReference>
<dbReference type="HOGENOM" id="CLU_020695_13_3_1"/>
<dbReference type="InParanoid" id="Q2QQ96"/>
<dbReference type="OMA" id="QNIERNR"/>
<dbReference type="OrthoDB" id="5590282at2759"/>
<dbReference type="Proteomes" id="UP000000763">
    <property type="component" value="Chromosome 12"/>
</dbReference>
<dbReference type="Proteomes" id="UP000059680">
    <property type="component" value="Chromosome 12"/>
</dbReference>
<dbReference type="GO" id="GO:0000307">
    <property type="term" value="C:cyclin-dependent protein kinase holoenzyme complex"/>
    <property type="evidence" value="ECO:0000318"/>
    <property type="project" value="GO_Central"/>
</dbReference>
<dbReference type="GO" id="GO:0005737">
    <property type="term" value="C:cytoplasm"/>
    <property type="evidence" value="ECO:0000318"/>
    <property type="project" value="GO_Central"/>
</dbReference>
<dbReference type="GO" id="GO:0005634">
    <property type="term" value="C:nucleus"/>
    <property type="evidence" value="ECO:0000318"/>
    <property type="project" value="GO_Central"/>
</dbReference>
<dbReference type="GO" id="GO:0016538">
    <property type="term" value="F:cyclin-dependent protein serine/threonine kinase regulator activity"/>
    <property type="evidence" value="ECO:0000318"/>
    <property type="project" value="GO_Central"/>
</dbReference>
<dbReference type="GO" id="GO:0051301">
    <property type="term" value="P:cell division"/>
    <property type="evidence" value="ECO:0007669"/>
    <property type="project" value="UniProtKB-KW"/>
</dbReference>
<dbReference type="GO" id="GO:0000082">
    <property type="term" value="P:G1/S transition of mitotic cell cycle"/>
    <property type="evidence" value="ECO:0000318"/>
    <property type="project" value="GO_Central"/>
</dbReference>
<dbReference type="CDD" id="cd20506">
    <property type="entry name" value="CYCLIN_AtCycA-like_rpt2"/>
    <property type="match status" value="1"/>
</dbReference>
<dbReference type="CDD" id="cd20562">
    <property type="entry name" value="CYCLIN_AtCycA_like_rpt1"/>
    <property type="match status" value="1"/>
</dbReference>
<dbReference type="FunFam" id="1.10.472.10:FF:000013">
    <property type="entry name" value="Cyclin A1"/>
    <property type="match status" value="1"/>
</dbReference>
<dbReference type="FunFam" id="1.10.472.10:FF:000167">
    <property type="entry name" value="Mitotic cyclin 6"/>
    <property type="match status" value="1"/>
</dbReference>
<dbReference type="Gene3D" id="1.10.472.10">
    <property type="entry name" value="Cyclin-like"/>
    <property type="match status" value="2"/>
</dbReference>
<dbReference type="InterPro" id="IPR039361">
    <property type="entry name" value="Cyclin"/>
</dbReference>
<dbReference type="InterPro" id="IPR013763">
    <property type="entry name" value="Cyclin-like_dom"/>
</dbReference>
<dbReference type="InterPro" id="IPR036915">
    <property type="entry name" value="Cyclin-like_sf"/>
</dbReference>
<dbReference type="InterPro" id="IPR046965">
    <property type="entry name" value="Cyclin_A/B-like"/>
</dbReference>
<dbReference type="InterPro" id="IPR004367">
    <property type="entry name" value="Cyclin_C-dom"/>
</dbReference>
<dbReference type="InterPro" id="IPR006671">
    <property type="entry name" value="Cyclin_N"/>
</dbReference>
<dbReference type="InterPro" id="IPR048258">
    <property type="entry name" value="Cyclins_cyclin-box"/>
</dbReference>
<dbReference type="PANTHER" id="PTHR10177">
    <property type="entry name" value="CYCLINS"/>
    <property type="match status" value="1"/>
</dbReference>
<dbReference type="Pfam" id="PF02984">
    <property type="entry name" value="Cyclin_C"/>
    <property type="match status" value="1"/>
</dbReference>
<dbReference type="Pfam" id="PF00134">
    <property type="entry name" value="Cyclin_N"/>
    <property type="match status" value="1"/>
</dbReference>
<dbReference type="PIRSF" id="PIRSF001771">
    <property type="entry name" value="Cyclin_A_B_D_E"/>
    <property type="match status" value="1"/>
</dbReference>
<dbReference type="SMART" id="SM00385">
    <property type="entry name" value="CYCLIN"/>
    <property type="match status" value="2"/>
</dbReference>
<dbReference type="SMART" id="SM01332">
    <property type="entry name" value="Cyclin_C"/>
    <property type="match status" value="1"/>
</dbReference>
<dbReference type="SUPFAM" id="SSF47954">
    <property type="entry name" value="Cyclin-like"/>
    <property type="match status" value="2"/>
</dbReference>
<dbReference type="PROSITE" id="PS00292">
    <property type="entry name" value="CYCLINS"/>
    <property type="match status" value="1"/>
</dbReference>
<protein>
    <recommendedName>
        <fullName>Cyclin-A2-1</fullName>
    </recommendedName>
    <alternativeName>
        <fullName>G2/mitotic-specific cyclin-A2-1</fullName>
        <shortName>CycA2;1</shortName>
    </alternativeName>
</protein>